<comment type="function">
    <text evidence="1 2">Catalyzes the transfer of a N-acetyl-glucosamine moiety to 1D-myo-inositol 3-phosphate to produce 1D-myo-inositol 2-acetamido-2-deoxy-glucopyranoside 3-phosphate in the mycothiol (MSH) biosynthesis pathway (By similarity). MSH and WhiB3 are probably part of a regulatory circuit that mediates gene expression upon acid stress (like that found in host macrophage phagosomes). MSH is one of the major redox buffers which protects bacteria against redox stressors and antibiotics; loss of MSH or ergothioneine (ERG, the other major redox buffer in this bacteria) leads to respiratory alterations and bioenergetic deficiencies that negatively impact virulence (By similarity).</text>
</comment>
<comment type="catalytic activity">
    <reaction evidence="2">
        <text>1D-myo-inositol 3-phosphate + UDP-N-acetyl-alpha-D-glucosamine = 1D-myo-inositol 2-acetamido-2-deoxy-alpha-D-glucopyranoside 3-phosphate + UDP + H(+)</text>
        <dbReference type="Rhea" id="RHEA:26188"/>
        <dbReference type="ChEBI" id="CHEBI:15378"/>
        <dbReference type="ChEBI" id="CHEBI:57705"/>
        <dbReference type="ChEBI" id="CHEBI:58223"/>
        <dbReference type="ChEBI" id="CHEBI:58401"/>
        <dbReference type="ChEBI" id="CHEBI:58892"/>
        <dbReference type="EC" id="2.4.1.250"/>
    </reaction>
</comment>
<comment type="subunit">
    <text evidence="2">Homodimer.</text>
</comment>
<comment type="similarity">
    <text evidence="2">Belongs to the glycosyltransferase group 1 family. MshA subfamily.</text>
</comment>
<evidence type="ECO:0000250" key="1">
    <source>
        <dbReference type="UniProtKB" id="P9WMY7"/>
    </source>
</evidence>
<evidence type="ECO:0000255" key="2">
    <source>
        <dbReference type="HAMAP-Rule" id="MF_01695"/>
    </source>
</evidence>
<evidence type="ECO:0000256" key="3">
    <source>
        <dbReference type="SAM" id="MobiDB-lite"/>
    </source>
</evidence>
<protein>
    <recommendedName>
        <fullName>D-inositol 3-phosphate glycosyltransferase</fullName>
        <ecNumber evidence="2">2.4.1.250</ecNumber>
    </recommendedName>
    <alternativeName>
        <fullName evidence="2">N-acetylglucosamine-inositol-phosphate N-acetylglucosaminyltransferase</fullName>
        <shortName evidence="2">GlcNAc-Ins-P N-acetylglucosaminyltransferase</shortName>
    </alternativeName>
</protein>
<gene>
    <name evidence="2" type="primary">mshA</name>
    <name type="ordered locus">BCG_0527</name>
</gene>
<sequence length="480" mass="50541">MAGVRHDDGSGLIAQRRPVRGEGATRSRGPSGPSNRNVSAADDPRRVALLAVHTSPLAQPGTGDAGGMNVYMLQSALHLARRGIEVEIFTRATASADPPVVRVAPGVLVRNVVAGPFEGLDKYDLPTQLCAFAAGVLRAEAVHEPGYYDIVHSHYWLSGQVGWLARDRWAVPLVHTAHTLAAVKNAALADGDGPEPPLRTVGEQQVVDEADRLIVNTDDEARQVISLHGADPARIDVVHPGVDLDVFRPGDRRAARAALGLPVDERVVAFVGRIQPLKAPDIVLRAAAKLPGVRIIVAGGPSGSGLASPDGLVRLADELGISARVTFLPPQSHTDLATLFRAADLVAVPSYSESFGLVAVEAQACGTPVVAAAVGGLPVAVRDGITGTLVSGHEVGQWADAIDHLLRLCAGPRGRVMSRAAARHAATFSWENTTDALLASYRRAIGEYNAERQRRGGEVISDLVAVGKPRHWTPRRGVGA</sequence>
<organism>
    <name type="scientific">Mycobacterium bovis (strain BCG / Pasteur 1173P2)</name>
    <dbReference type="NCBI Taxonomy" id="410289"/>
    <lineage>
        <taxon>Bacteria</taxon>
        <taxon>Bacillati</taxon>
        <taxon>Actinomycetota</taxon>
        <taxon>Actinomycetes</taxon>
        <taxon>Mycobacteriales</taxon>
        <taxon>Mycobacteriaceae</taxon>
        <taxon>Mycobacterium</taxon>
        <taxon>Mycobacterium tuberculosis complex</taxon>
    </lineage>
</organism>
<name>MSHA_MYCBP</name>
<reference key="1">
    <citation type="journal article" date="2007" name="Proc. Natl. Acad. Sci. U.S.A.">
        <title>Genome plasticity of BCG and impact on vaccine efficacy.</title>
        <authorList>
            <person name="Brosch R."/>
            <person name="Gordon S.V."/>
            <person name="Garnier T."/>
            <person name="Eiglmeier K."/>
            <person name="Frigui W."/>
            <person name="Valenti P."/>
            <person name="Dos Santos S."/>
            <person name="Duthoy S."/>
            <person name="Lacroix C."/>
            <person name="Garcia-Pelayo C."/>
            <person name="Inwald J.K."/>
            <person name="Golby P."/>
            <person name="Garcia J.N."/>
            <person name="Hewinson R.G."/>
            <person name="Behr M.A."/>
            <person name="Quail M.A."/>
            <person name="Churcher C."/>
            <person name="Barrell B.G."/>
            <person name="Parkhill J."/>
            <person name="Cole S.T."/>
        </authorList>
    </citation>
    <scope>NUCLEOTIDE SEQUENCE [LARGE SCALE GENOMIC DNA]</scope>
    <source>
        <strain>BCG / Pasteur 1173P2</strain>
    </source>
</reference>
<feature type="chain" id="PRO_0000400132" description="D-inositol 3-phosphate glycosyltransferase">
    <location>
        <begin position="1"/>
        <end position="480"/>
    </location>
</feature>
<feature type="region of interest" description="Disordered" evidence="3">
    <location>
        <begin position="1"/>
        <end position="42"/>
    </location>
</feature>
<feature type="binding site" evidence="2">
    <location>
        <position position="53"/>
    </location>
    <ligand>
        <name>1D-myo-inositol 3-phosphate</name>
        <dbReference type="ChEBI" id="CHEBI:58401"/>
    </ligand>
</feature>
<feature type="binding site" evidence="2">
    <location>
        <begin position="59"/>
        <end position="60"/>
    </location>
    <ligand>
        <name>UDP-N-acetyl-alpha-D-glucosamine</name>
        <dbReference type="ChEBI" id="CHEBI:57705"/>
    </ligand>
</feature>
<feature type="binding site" evidence="2">
    <location>
        <begin position="64"/>
        <end position="69"/>
    </location>
    <ligand>
        <name>1D-myo-inositol 3-phosphate</name>
        <dbReference type="ChEBI" id="CHEBI:58401"/>
    </ligand>
</feature>
<feature type="binding site" evidence="2">
    <location>
        <position position="67"/>
    </location>
    <ligand>
        <name>UDP-N-acetyl-alpha-D-glucosamine</name>
        <dbReference type="ChEBI" id="CHEBI:57705"/>
    </ligand>
</feature>
<feature type="binding site" evidence="2">
    <location>
        <position position="122"/>
    </location>
    <ligand>
        <name>1D-myo-inositol 3-phosphate</name>
        <dbReference type="ChEBI" id="CHEBI:58401"/>
    </ligand>
</feature>
<feature type="binding site" evidence="2">
    <location>
        <position position="155"/>
    </location>
    <ligand>
        <name>1D-myo-inositol 3-phosphate</name>
        <dbReference type="ChEBI" id="CHEBI:58401"/>
    </ligand>
</feature>
<feature type="binding site" evidence="2">
    <location>
        <position position="179"/>
    </location>
    <ligand>
        <name>1D-myo-inositol 3-phosphate</name>
        <dbReference type="ChEBI" id="CHEBI:58401"/>
    </ligand>
</feature>
<feature type="binding site" evidence="2">
    <location>
        <position position="199"/>
    </location>
    <ligand>
        <name>1D-myo-inositol 3-phosphate</name>
        <dbReference type="ChEBI" id="CHEBI:58401"/>
    </ligand>
</feature>
<feature type="binding site" evidence="2">
    <location>
        <position position="273"/>
    </location>
    <ligand>
        <name>UDP-N-acetyl-alpha-D-glucosamine</name>
        <dbReference type="ChEBI" id="CHEBI:57705"/>
    </ligand>
</feature>
<feature type="binding site" evidence="2">
    <location>
        <position position="278"/>
    </location>
    <ligand>
        <name>UDP-N-acetyl-alpha-D-glucosamine</name>
        <dbReference type="ChEBI" id="CHEBI:57705"/>
    </ligand>
</feature>
<feature type="binding site" evidence="2">
    <location>
        <position position="331"/>
    </location>
    <ligand>
        <name>UDP-N-acetyl-alpha-D-glucosamine</name>
        <dbReference type="ChEBI" id="CHEBI:57705"/>
    </ligand>
</feature>
<feature type="binding site" evidence="2">
    <location>
        <position position="340"/>
    </location>
    <ligand>
        <name>Mg(2+)</name>
        <dbReference type="ChEBI" id="CHEBI:18420"/>
    </ligand>
</feature>
<feature type="binding site" evidence="2">
    <location>
        <position position="341"/>
    </location>
    <ligand>
        <name>Mg(2+)</name>
        <dbReference type="ChEBI" id="CHEBI:18420"/>
    </ligand>
</feature>
<feature type="binding site" evidence="2">
    <location>
        <position position="343"/>
    </location>
    <ligand>
        <name>Mg(2+)</name>
        <dbReference type="ChEBI" id="CHEBI:18420"/>
    </ligand>
</feature>
<feature type="binding site" evidence="2">
    <location>
        <position position="353"/>
    </location>
    <ligand>
        <name>UDP-N-acetyl-alpha-D-glucosamine</name>
        <dbReference type="ChEBI" id="CHEBI:57705"/>
    </ligand>
</feature>
<feature type="binding site" evidence="2">
    <location>
        <position position="361"/>
    </location>
    <ligand>
        <name>UDP-N-acetyl-alpha-D-glucosamine</name>
        <dbReference type="ChEBI" id="CHEBI:57705"/>
    </ligand>
</feature>
<feature type="binding site" evidence="2">
    <location>
        <position position="367"/>
    </location>
    <ligand>
        <name>Mg(2+)</name>
        <dbReference type="ChEBI" id="CHEBI:18420"/>
    </ligand>
</feature>
<accession>A1KFW0</accession>
<keyword id="KW-0328">Glycosyltransferase</keyword>
<keyword id="KW-0460">Magnesium</keyword>
<keyword id="KW-0479">Metal-binding</keyword>
<keyword id="KW-0808">Transferase</keyword>
<dbReference type="EC" id="2.4.1.250" evidence="2"/>
<dbReference type="EMBL" id="AM408590">
    <property type="protein sequence ID" value="CAL70512.1"/>
    <property type="molecule type" value="Genomic_DNA"/>
</dbReference>
<dbReference type="RefSeq" id="WP_003402367.1">
    <property type="nucleotide sequence ID" value="NC_008769.1"/>
</dbReference>
<dbReference type="SMR" id="A1KFW0"/>
<dbReference type="CAZy" id="GT4">
    <property type="family name" value="Glycosyltransferase Family 4"/>
</dbReference>
<dbReference type="KEGG" id="mbb:BCG_0527"/>
<dbReference type="HOGENOM" id="CLU_009583_2_3_11"/>
<dbReference type="Proteomes" id="UP000001472">
    <property type="component" value="Chromosome"/>
</dbReference>
<dbReference type="GO" id="GO:0008375">
    <property type="term" value="F:acetylglucosaminyltransferase activity"/>
    <property type="evidence" value="ECO:0007669"/>
    <property type="project" value="UniProtKB-UniRule"/>
</dbReference>
<dbReference type="GO" id="GO:0102710">
    <property type="term" value="F:D-inositol-3-phosphate glycosyltransferase activity"/>
    <property type="evidence" value="ECO:0007669"/>
    <property type="project" value="UniProtKB-EC"/>
</dbReference>
<dbReference type="GO" id="GO:0000287">
    <property type="term" value="F:magnesium ion binding"/>
    <property type="evidence" value="ECO:0007669"/>
    <property type="project" value="UniProtKB-UniRule"/>
</dbReference>
<dbReference type="GO" id="GO:0010125">
    <property type="term" value="P:mycothiol biosynthetic process"/>
    <property type="evidence" value="ECO:0007669"/>
    <property type="project" value="UniProtKB-UniRule"/>
</dbReference>
<dbReference type="CDD" id="cd03800">
    <property type="entry name" value="GT4_sucrose_synthase"/>
    <property type="match status" value="1"/>
</dbReference>
<dbReference type="FunFam" id="3.40.50.2000:FF:000265">
    <property type="entry name" value="D-inositol 3-phosphate glycosyltransferase"/>
    <property type="match status" value="1"/>
</dbReference>
<dbReference type="FunFam" id="3.40.50.2000:FF:000123">
    <property type="entry name" value="D-inositol-3-phosphate glycosyltransferase"/>
    <property type="match status" value="1"/>
</dbReference>
<dbReference type="Gene3D" id="3.40.50.2000">
    <property type="entry name" value="Glycogen Phosphorylase B"/>
    <property type="match status" value="2"/>
</dbReference>
<dbReference type="HAMAP" id="MF_01695">
    <property type="entry name" value="MshA"/>
    <property type="match status" value="1"/>
</dbReference>
<dbReference type="InterPro" id="IPR001296">
    <property type="entry name" value="Glyco_trans_1"/>
</dbReference>
<dbReference type="InterPro" id="IPR028098">
    <property type="entry name" value="Glyco_trans_4-like_N"/>
</dbReference>
<dbReference type="InterPro" id="IPR017814">
    <property type="entry name" value="Mycothiol_biosynthesis_MshA"/>
</dbReference>
<dbReference type="NCBIfam" id="TIGR03449">
    <property type="entry name" value="mycothiol_MshA"/>
    <property type="match status" value="1"/>
</dbReference>
<dbReference type="PANTHER" id="PTHR12526:SF510">
    <property type="entry name" value="D-INOSITOL 3-PHOSPHATE GLYCOSYLTRANSFERASE"/>
    <property type="match status" value="1"/>
</dbReference>
<dbReference type="PANTHER" id="PTHR12526">
    <property type="entry name" value="GLYCOSYLTRANSFERASE"/>
    <property type="match status" value="1"/>
</dbReference>
<dbReference type="Pfam" id="PF13579">
    <property type="entry name" value="Glyco_trans_4_4"/>
    <property type="match status" value="1"/>
</dbReference>
<dbReference type="Pfam" id="PF00534">
    <property type="entry name" value="Glycos_transf_1"/>
    <property type="match status" value="1"/>
</dbReference>
<dbReference type="SUPFAM" id="SSF53756">
    <property type="entry name" value="UDP-Glycosyltransferase/glycogen phosphorylase"/>
    <property type="match status" value="1"/>
</dbReference>
<proteinExistence type="inferred from homology"/>